<organism>
    <name type="scientific">Serratia marcescens</name>
    <dbReference type="NCBI Taxonomy" id="615"/>
    <lineage>
        <taxon>Bacteria</taxon>
        <taxon>Pseudomonadati</taxon>
        <taxon>Pseudomonadota</taxon>
        <taxon>Gammaproteobacteria</taxon>
        <taxon>Enterobacterales</taxon>
        <taxon>Yersiniaceae</taxon>
        <taxon>Serratia</taxon>
    </lineage>
</organism>
<proteinExistence type="inferred from homology"/>
<dbReference type="EC" id="1.2.1.12" evidence="1"/>
<dbReference type="EMBL" id="M63373">
    <property type="protein sequence ID" value="AAA26554.1"/>
    <property type="molecule type" value="Genomic_DNA"/>
</dbReference>
<dbReference type="SMR" id="P24166"/>
<dbReference type="STRING" id="273526.SMDB11_1997"/>
<dbReference type="UniPathway" id="UPA00109">
    <property type="reaction ID" value="UER00184"/>
</dbReference>
<dbReference type="GO" id="GO:0005737">
    <property type="term" value="C:cytoplasm"/>
    <property type="evidence" value="ECO:0007669"/>
    <property type="project" value="UniProtKB-SubCell"/>
</dbReference>
<dbReference type="GO" id="GO:0004365">
    <property type="term" value="F:glyceraldehyde-3-phosphate dehydrogenase (NAD+) (phosphorylating) activity"/>
    <property type="evidence" value="ECO:0000250"/>
    <property type="project" value="UniProtKB"/>
</dbReference>
<dbReference type="GO" id="GO:0051287">
    <property type="term" value="F:NAD binding"/>
    <property type="evidence" value="ECO:0000250"/>
    <property type="project" value="UniProtKB"/>
</dbReference>
<dbReference type="GO" id="GO:0050661">
    <property type="term" value="F:NADP binding"/>
    <property type="evidence" value="ECO:0007669"/>
    <property type="project" value="InterPro"/>
</dbReference>
<dbReference type="GO" id="GO:0006006">
    <property type="term" value="P:glucose metabolic process"/>
    <property type="evidence" value="ECO:0007669"/>
    <property type="project" value="InterPro"/>
</dbReference>
<dbReference type="GO" id="GO:0006096">
    <property type="term" value="P:glycolytic process"/>
    <property type="evidence" value="ECO:0007669"/>
    <property type="project" value="UniProtKB-UniPathway"/>
</dbReference>
<dbReference type="CDD" id="cd18126">
    <property type="entry name" value="GAPDH_I_C"/>
    <property type="match status" value="1"/>
</dbReference>
<dbReference type="CDD" id="cd05214">
    <property type="entry name" value="GAPDH_I_N"/>
    <property type="match status" value="1"/>
</dbReference>
<dbReference type="FunFam" id="3.30.360.10:FF:000001">
    <property type="entry name" value="Glyceraldehyde-3-phosphate dehydrogenase"/>
    <property type="match status" value="1"/>
</dbReference>
<dbReference type="FunFam" id="3.40.50.720:FF:000001">
    <property type="entry name" value="Glyceraldehyde-3-phosphate dehydrogenase"/>
    <property type="match status" value="1"/>
</dbReference>
<dbReference type="Gene3D" id="3.30.360.10">
    <property type="entry name" value="Dihydrodipicolinate Reductase, domain 2"/>
    <property type="match status" value="1"/>
</dbReference>
<dbReference type="Gene3D" id="3.40.50.720">
    <property type="entry name" value="NAD(P)-binding Rossmann-like Domain"/>
    <property type="match status" value="1"/>
</dbReference>
<dbReference type="InterPro" id="IPR020831">
    <property type="entry name" value="GlycerAld/Erythrose_P_DH"/>
</dbReference>
<dbReference type="InterPro" id="IPR020830">
    <property type="entry name" value="GlycerAld_3-P_DH_AS"/>
</dbReference>
<dbReference type="InterPro" id="IPR020829">
    <property type="entry name" value="GlycerAld_3-P_DH_cat"/>
</dbReference>
<dbReference type="InterPro" id="IPR020828">
    <property type="entry name" value="GlycerAld_3-P_DH_NAD(P)-bd"/>
</dbReference>
<dbReference type="InterPro" id="IPR006424">
    <property type="entry name" value="Glyceraldehyde-3-P_DH_1"/>
</dbReference>
<dbReference type="InterPro" id="IPR036291">
    <property type="entry name" value="NAD(P)-bd_dom_sf"/>
</dbReference>
<dbReference type="NCBIfam" id="TIGR01534">
    <property type="entry name" value="GAPDH-I"/>
    <property type="match status" value="1"/>
</dbReference>
<dbReference type="PANTHER" id="PTHR10836">
    <property type="entry name" value="GLYCERALDEHYDE 3-PHOSPHATE DEHYDROGENASE"/>
    <property type="match status" value="1"/>
</dbReference>
<dbReference type="PANTHER" id="PTHR10836:SF76">
    <property type="entry name" value="GLYCERALDEHYDE-3-PHOSPHATE DEHYDROGENASE-RELATED"/>
    <property type="match status" value="1"/>
</dbReference>
<dbReference type="Pfam" id="PF02800">
    <property type="entry name" value="Gp_dh_C"/>
    <property type="match status" value="1"/>
</dbReference>
<dbReference type="Pfam" id="PF00044">
    <property type="entry name" value="Gp_dh_N"/>
    <property type="match status" value="1"/>
</dbReference>
<dbReference type="PIRSF" id="PIRSF000149">
    <property type="entry name" value="GAP_DH"/>
    <property type="match status" value="1"/>
</dbReference>
<dbReference type="PRINTS" id="PR00078">
    <property type="entry name" value="G3PDHDRGNASE"/>
</dbReference>
<dbReference type="SMART" id="SM00846">
    <property type="entry name" value="Gp_dh_N"/>
    <property type="match status" value="1"/>
</dbReference>
<dbReference type="SUPFAM" id="SSF55347">
    <property type="entry name" value="Glyceraldehyde-3-phosphate dehydrogenase-like, C-terminal domain"/>
    <property type="match status" value="1"/>
</dbReference>
<dbReference type="SUPFAM" id="SSF51735">
    <property type="entry name" value="NAD(P)-binding Rossmann-fold domains"/>
    <property type="match status" value="1"/>
</dbReference>
<dbReference type="PROSITE" id="PS00071">
    <property type="entry name" value="GAPDH"/>
    <property type="match status" value="1"/>
</dbReference>
<evidence type="ECO:0000250" key="1">
    <source>
        <dbReference type="UniProtKB" id="P0A9B2"/>
    </source>
</evidence>
<evidence type="ECO:0000256" key="2">
    <source>
        <dbReference type="SAM" id="MobiDB-lite"/>
    </source>
</evidence>
<evidence type="ECO:0000305" key="3"/>
<name>G3P_SERMA</name>
<protein>
    <recommendedName>
        <fullName evidence="1">Glyceraldehyde-3-phosphate dehydrogenase</fullName>
        <shortName evidence="1">GAPDH</shortName>
        <ecNumber evidence="1">1.2.1.12</ecNumber>
    </recommendedName>
    <alternativeName>
        <fullName evidence="1">NAD-dependent glyceraldehyde-3-phosphate dehydrogenase</fullName>
    </alternativeName>
</protein>
<reference key="1">
    <citation type="journal article" date="1991" name="J. Gen. Microbiol.">
        <title>Molecular and evolutionary relationships among enteric bacteria.</title>
        <authorList>
            <person name="Lawrence J.G."/>
            <person name="Ochman H."/>
            <person name="Hartl D.L."/>
        </authorList>
    </citation>
    <scope>NUCLEOTIDE SEQUENCE [GENOMIC DNA]</scope>
    <source>
        <strain>ATCC 13880 / DSM 30121 / JCM 1239 / NBRC 102204 / NCIMB 9155 / NCTC 10211</strain>
    </source>
</reference>
<gene>
    <name type="primary">gap</name>
</gene>
<keyword id="KW-0963">Cytoplasm</keyword>
<keyword id="KW-0324">Glycolysis</keyword>
<keyword id="KW-0520">NAD</keyword>
<keyword id="KW-0547">Nucleotide-binding</keyword>
<keyword id="KW-0560">Oxidoreductase</keyword>
<feature type="chain" id="PRO_0000145680" description="Glyceraldehyde-3-phosphate dehydrogenase">
    <location>
        <begin position="1" status="less than"/>
        <end position="294" status="greater than"/>
    </location>
</feature>
<feature type="region of interest" description="Disordered" evidence="2">
    <location>
        <begin position="169"/>
        <end position="188"/>
    </location>
</feature>
<feature type="active site" description="Nucleophile" evidence="1">
    <location>
        <position position="135"/>
    </location>
</feature>
<feature type="binding site" evidence="1">
    <location>
        <position position="19"/>
    </location>
    <ligand>
        <name>NAD(+)</name>
        <dbReference type="ChEBI" id="CHEBI:57540"/>
    </ligand>
</feature>
<feature type="binding site" evidence="1">
    <location>
        <position position="63"/>
    </location>
    <ligand>
        <name>NAD(+)</name>
        <dbReference type="ChEBI" id="CHEBI:57540"/>
    </ligand>
</feature>
<feature type="binding site" evidence="1">
    <location>
        <position position="105"/>
    </location>
    <ligand>
        <name>NAD(+)</name>
        <dbReference type="ChEBI" id="CHEBI:57540"/>
    </ligand>
</feature>
<feature type="binding site" evidence="1">
    <location>
        <begin position="134"/>
        <end position="136"/>
    </location>
    <ligand>
        <name>D-glyceraldehyde 3-phosphate</name>
        <dbReference type="ChEBI" id="CHEBI:59776"/>
    </ligand>
</feature>
<feature type="binding site" evidence="1">
    <location>
        <position position="165"/>
    </location>
    <ligand>
        <name>D-glyceraldehyde 3-phosphate</name>
        <dbReference type="ChEBI" id="CHEBI:59776"/>
    </ligand>
</feature>
<feature type="binding site" evidence="1">
    <location>
        <begin position="194"/>
        <end position="195"/>
    </location>
    <ligand>
        <name>D-glyceraldehyde 3-phosphate</name>
        <dbReference type="ChEBI" id="CHEBI:59776"/>
    </ligand>
</feature>
<feature type="binding site" evidence="1">
    <location>
        <position position="217"/>
    </location>
    <ligand>
        <name>D-glyceraldehyde 3-phosphate</name>
        <dbReference type="ChEBI" id="CHEBI:59776"/>
    </ligand>
</feature>
<feature type="site" description="Activates thiol group during catalysis" evidence="1">
    <location>
        <position position="162"/>
    </location>
</feature>
<feature type="non-terminal residue">
    <location>
        <position position="1"/>
    </location>
</feature>
<feature type="non-terminal residue">
    <location>
        <position position="294"/>
    </location>
</feature>
<accession>P24166</accession>
<sequence>IVFRAAQERSDIEIVAINDLLDAEYMAYMLKYDSTHGRFNGTVEVKDGHLVVNGKTIRVTAEKDPANLKWNEVGVDVVAEATGIFLTDETARKHITAGAKKVVLTGPSKDATPMFVRGANFDKYAGQDIVSNASCTTNCLAPLAKVINDNFGIVEGLMTTVHATTATQKTVDGPSHKDWRGGRGASQNIIPSSTGAAKAVGKVIPELKGKLTGMAFRVPTPNVSVVDLTVRLEKPATYEEIKKAMKDAAEGSMKGVLGYVEDDVVSTDFNGEVLTSVFDAKAGIALNDNFVKLV</sequence>
<comment type="function">
    <text evidence="1">Catalyzes the oxidative phosphorylation of glyceraldehyde 3-phosphate (G3P) to 1,3-bisphosphoglycerate (BPG) using the cofactor NAD. The first reaction step involves the formation of a hemiacetal intermediate between G3P and a cysteine residue, and this hemiacetal intermediate is then oxidized to a thioester, with concomitant reduction of NAD to NADH. The reduced NADH is then exchanged with the second NAD, and the thioester is attacked by a nucleophilic inorganic phosphate to produce BPG.</text>
</comment>
<comment type="catalytic activity">
    <reaction evidence="1">
        <text>D-glyceraldehyde 3-phosphate + phosphate + NAD(+) = (2R)-3-phospho-glyceroyl phosphate + NADH + H(+)</text>
        <dbReference type="Rhea" id="RHEA:10300"/>
        <dbReference type="ChEBI" id="CHEBI:15378"/>
        <dbReference type="ChEBI" id="CHEBI:43474"/>
        <dbReference type="ChEBI" id="CHEBI:57540"/>
        <dbReference type="ChEBI" id="CHEBI:57604"/>
        <dbReference type="ChEBI" id="CHEBI:57945"/>
        <dbReference type="ChEBI" id="CHEBI:59776"/>
        <dbReference type="EC" id="1.2.1.12"/>
    </reaction>
</comment>
<comment type="pathway">
    <text evidence="3">Carbohydrate degradation; glycolysis; pyruvate from D-glyceraldehyde 3-phosphate: step 1/5.</text>
</comment>
<comment type="subunit">
    <text evidence="1">Homotetramer.</text>
</comment>
<comment type="subcellular location">
    <subcellularLocation>
        <location evidence="3">Cytoplasm</location>
    </subcellularLocation>
</comment>
<comment type="similarity">
    <text evidence="3">Belongs to the glyceraldehyde-3-phosphate dehydrogenase family.</text>
</comment>